<protein>
    <recommendedName>
        <fullName evidence="1">Ion-translocating oxidoreductase complex subunit B</fullName>
        <ecNumber evidence="1">7.-.-.-</ecNumber>
    </recommendedName>
    <alternativeName>
        <fullName evidence="1">Rsx electron transport complex subunit B</fullName>
    </alternativeName>
</protein>
<dbReference type="EC" id="7.-.-.-" evidence="1"/>
<dbReference type="EMBL" id="CU928163">
    <property type="protein sequence ID" value="CAR13116.1"/>
    <property type="molecule type" value="Genomic_DNA"/>
</dbReference>
<dbReference type="RefSeq" id="WP_000991806.1">
    <property type="nucleotide sequence ID" value="NC_011751.1"/>
</dbReference>
<dbReference type="RefSeq" id="YP_002412648.1">
    <property type="nucleotide sequence ID" value="NC_011751.1"/>
</dbReference>
<dbReference type="STRING" id="585056.ECUMN_1919"/>
<dbReference type="KEGG" id="eum:ECUMN_1919"/>
<dbReference type="PATRIC" id="fig|585056.7.peg.2102"/>
<dbReference type="HOGENOM" id="CLU_063448_2_0_6"/>
<dbReference type="Proteomes" id="UP000007097">
    <property type="component" value="Chromosome"/>
</dbReference>
<dbReference type="GO" id="GO:0005886">
    <property type="term" value="C:plasma membrane"/>
    <property type="evidence" value="ECO:0007669"/>
    <property type="project" value="UniProtKB-SubCell"/>
</dbReference>
<dbReference type="GO" id="GO:0051539">
    <property type="term" value="F:4 iron, 4 sulfur cluster binding"/>
    <property type="evidence" value="ECO:0007669"/>
    <property type="project" value="UniProtKB-UniRule"/>
</dbReference>
<dbReference type="GO" id="GO:0009055">
    <property type="term" value="F:electron transfer activity"/>
    <property type="evidence" value="ECO:0007669"/>
    <property type="project" value="InterPro"/>
</dbReference>
<dbReference type="GO" id="GO:0046872">
    <property type="term" value="F:metal ion binding"/>
    <property type="evidence" value="ECO:0007669"/>
    <property type="project" value="UniProtKB-KW"/>
</dbReference>
<dbReference type="GO" id="GO:0022900">
    <property type="term" value="P:electron transport chain"/>
    <property type="evidence" value="ECO:0007669"/>
    <property type="project" value="UniProtKB-UniRule"/>
</dbReference>
<dbReference type="FunFam" id="1.10.15.40:FF:000001">
    <property type="entry name" value="Ion-translocating oxidoreductase complex subunit B"/>
    <property type="match status" value="1"/>
</dbReference>
<dbReference type="Gene3D" id="3.30.70.20">
    <property type="match status" value="1"/>
</dbReference>
<dbReference type="Gene3D" id="1.10.15.40">
    <property type="entry name" value="Electron transport complex subunit B, putative Fe-S cluster"/>
    <property type="match status" value="1"/>
</dbReference>
<dbReference type="HAMAP" id="MF_00463">
    <property type="entry name" value="RsxB_RnfB"/>
    <property type="match status" value="1"/>
</dbReference>
<dbReference type="InterPro" id="IPR007202">
    <property type="entry name" value="4Fe-4S_dom"/>
</dbReference>
<dbReference type="InterPro" id="IPR017896">
    <property type="entry name" value="4Fe4S_Fe-S-bd"/>
</dbReference>
<dbReference type="InterPro" id="IPR017900">
    <property type="entry name" value="4Fe4S_Fe_S_CS"/>
</dbReference>
<dbReference type="InterPro" id="IPR050395">
    <property type="entry name" value="4Fe4S_Ferredoxin_RnfB"/>
</dbReference>
<dbReference type="InterPro" id="IPR010207">
    <property type="entry name" value="Elect_transpt_cplx_RnfB/RsxB"/>
</dbReference>
<dbReference type="InterPro" id="IPR016463">
    <property type="entry name" value="RnfB/RsxB_Proteobac"/>
</dbReference>
<dbReference type="NCBIfam" id="NF003475">
    <property type="entry name" value="PRK05113.1"/>
    <property type="match status" value="1"/>
</dbReference>
<dbReference type="NCBIfam" id="TIGR01944">
    <property type="entry name" value="rnfB"/>
    <property type="match status" value="1"/>
</dbReference>
<dbReference type="PANTHER" id="PTHR43560">
    <property type="entry name" value="ION-TRANSLOCATING OXIDOREDUCTASE COMPLEX SUBUNIT B"/>
    <property type="match status" value="1"/>
</dbReference>
<dbReference type="PANTHER" id="PTHR43560:SF1">
    <property type="entry name" value="ION-TRANSLOCATING OXIDOREDUCTASE COMPLEX SUBUNIT B"/>
    <property type="match status" value="1"/>
</dbReference>
<dbReference type="Pfam" id="PF14697">
    <property type="entry name" value="Fer4_21"/>
    <property type="match status" value="1"/>
</dbReference>
<dbReference type="Pfam" id="PF04060">
    <property type="entry name" value="FeS"/>
    <property type="match status" value="1"/>
</dbReference>
<dbReference type="PIRSF" id="PIRSF005784">
    <property type="entry name" value="Elect_transpt_RnfB"/>
    <property type="match status" value="1"/>
</dbReference>
<dbReference type="SUPFAM" id="SSF54862">
    <property type="entry name" value="4Fe-4S ferredoxins"/>
    <property type="match status" value="1"/>
</dbReference>
<dbReference type="PROSITE" id="PS51656">
    <property type="entry name" value="4FE4S"/>
    <property type="match status" value="1"/>
</dbReference>
<dbReference type="PROSITE" id="PS00198">
    <property type="entry name" value="4FE4S_FER_1"/>
    <property type="match status" value="2"/>
</dbReference>
<dbReference type="PROSITE" id="PS51379">
    <property type="entry name" value="4FE4S_FER_2"/>
    <property type="match status" value="2"/>
</dbReference>
<name>RSXB_ECOLU</name>
<accession>B7NB82</accession>
<proteinExistence type="inferred from homology"/>
<reference key="1">
    <citation type="journal article" date="2009" name="PLoS Genet.">
        <title>Organised genome dynamics in the Escherichia coli species results in highly diverse adaptive paths.</title>
        <authorList>
            <person name="Touchon M."/>
            <person name="Hoede C."/>
            <person name="Tenaillon O."/>
            <person name="Barbe V."/>
            <person name="Baeriswyl S."/>
            <person name="Bidet P."/>
            <person name="Bingen E."/>
            <person name="Bonacorsi S."/>
            <person name="Bouchier C."/>
            <person name="Bouvet O."/>
            <person name="Calteau A."/>
            <person name="Chiapello H."/>
            <person name="Clermont O."/>
            <person name="Cruveiller S."/>
            <person name="Danchin A."/>
            <person name="Diard M."/>
            <person name="Dossat C."/>
            <person name="Karoui M.E."/>
            <person name="Frapy E."/>
            <person name="Garry L."/>
            <person name="Ghigo J.M."/>
            <person name="Gilles A.M."/>
            <person name="Johnson J."/>
            <person name="Le Bouguenec C."/>
            <person name="Lescat M."/>
            <person name="Mangenot S."/>
            <person name="Martinez-Jehanne V."/>
            <person name="Matic I."/>
            <person name="Nassif X."/>
            <person name="Oztas S."/>
            <person name="Petit M.A."/>
            <person name="Pichon C."/>
            <person name="Rouy Z."/>
            <person name="Ruf C.S."/>
            <person name="Schneider D."/>
            <person name="Tourret J."/>
            <person name="Vacherie B."/>
            <person name="Vallenet D."/>
            <person name="Medigue C."/>
            <person name="Rocha E.P.C."/>
            <person name="Denamur E."/>
        </authorList>
    </citation>
    <scope>NUCLEOTIDE SEQUENCE [LARGE SCALE GENOMIC DNA]</scope>
    <source>
        <strain>UMN026 / ExPEC</strain>
    </source>
</reference>
<feature type="chain" id="PRO_1000194480" description="Ion-translocating oxidoreductase complex subunit B">
    <location>
        <begin position="1"/>
        <end position="192"/>
    </location>
</feature>
<feature type="domain" description="4Fe-4S" evidence="1">
    <location>
        <begin position="32"/>
        <end position="91"/>
    </location>
</feature>
<feature type="domain" description="4Fe-4S ferredoxin-type 1" evidence="1">
    <location>
        <begin position="108"/>
        <end position="137"/>
    </location>
</feature>
<feature type="domain" description="4Fe-4S ferredoxin-type 2" evidence="1">
    <location>
        <begin position="138"/>
        <end position="167"/>
    </location>
</feature>
<feature type="region of interest" description="Hydrophobic" evidence="1">
    <location>
        <begin position="1"/>
        <end position="26"/>
    </location>
</feature>
<feature type="binding site" evidence="1">
    <location>
        <position position="49"/>
    </location>
    <ligand>
        <name>[4Fe-4S] cluster</name>
        <dbReference type="ChEBI" id="CHEBI:49883"/>
        <label>1</label>
    </ligand>
</feature>
<feature type="binding site" evidence="1">
    <location>
        <position position="52"/>
    </location>
    <ligand>
        <name>[4Fe-4S] cluster</name>
        <dbReference type="ChEBI" id="CHEBI:49883"/>
        <label>1</label>
    </ligand>
</feature>
<feature type="binding site" evidence="1">
    <location>
        <position position="57"/>
    </location>
    <ligand>
        <name>[4Fe-4S] cluster</name>
        <dbReference type="ChEBI" id="CHEBI:49883"/>
        <label>1</label>
    </ligand>
</feature>
<feature type="binding site" evidence="1">
    <location>
        <position position="74"/>
    </location>
    <ligand>
        <name>[4Fe-4S] cluster</name>
        <dbReference type="ChEBI" id="CHEBI:49883"/>
        <label>1</label>
    </ligand>
</feature>
<feature type="binding site" evidence="1">
    <location>
        <position position="117"/>
    </location>
    <ligand>
        <name>[4Fe-4S] cluster</name>
        <dbReference type="ChEBI" id="CHEBI:49883"/>
        <label>2</label>
    </ligand>
</feature>
<feature type="binding site" evidence="1">
    <location>
        <position position="120"/>
    </location>
    <ligand>
        <name>[4Fe-4S] cluster</name>
        <dbReference type="ChEBI" id="CHEBI:49883"/>
        <label>2</label>
    </ligand>
</feature>
<feature type="binding site" evidence="1">
    <location>
        <position position="123"/>
    </location>
    <ligand>
        <name>[4Fe-4S] cluster</name>
        <dbReference type="ChEBI" id="CHEBI:49883"/>
        <label>2</label>
    </ligand>
</feature>
<feature type="binding site" evidence="1">
    <location>
        <position position="127"/>
    </location>
    <ligand>
        <name>[4Fe-4S] cluster</name>
        <dbReference type="ChEBI" id="CHEBI:49883"/>
        <label>3</label>
    </ligand>
</feature>
<feature type="binding site" evidence="1">
    <location>
        <position position="147"/>
    </location>
    <ligand>
        <name>[4Fe-4S] cluster</name>
        <dbReference type="ChEBI" id="CHEBI:49883"/>
        <label>3</label>
    </ligand>
</feature>
<feature type="binding site" evidence="1">
    <location>
        <position position="150"/>
    </location>
    <ligand>
        <name>[4Fe-4S] cluster</name>
        <dbReference type="ChEBI" id="CHEBI:49883"/>
        <label>3</label>
    </ligand>
</feature>
<feature type="binding site" evidence="1">
    <location>
        <position position="153"/>
    </location>
    <ligand>
        <name>[4Fe-4S] cluster</name>
        <dbReference type="ChEBI" id="CHEBI:49883"/>
        <label>3</label>
    </ligand>
</feature>
<feature type="binding site" evidence="1">
    <location>
        <position position="157"/>
    </location>
    <ligand>
        <name>[4Fe-4S] cluster</name>
        <dbReference type="ChEBI" id="CHEBI:49883"/>
        <label>2</label>
    </ligand>
</feature>
<evidence type="ECO:0000255" key="1">
    <source>
        <dbReference type="HAMAP-Rule" id="MF_00463"/>
    </source>
</evidence>
<keyword id="KW-0004">4Fe-4S</keyword>
<keyword id="KW-0997">Cell inner membrane</keyword>
<keyword id="KW-1003">Cell membrane</keyword>
<keyword id="KW-0249">Electron transport</keyword>
<keyword id="KW-0408">Iron</keyword>
<keyword id="KW-0411">Iron-sulfur</keyword>
<keyword id="KW-0472">Membrane</keyword>
<keyword id="KW-0479">Metal-binding</keyword>
<keyword id="KW-0677">Repeat</keyword>
<keyword id="KW-1278">Translocase</keyword>
<keyword id="KW-0813">Transport</keyword>
<sequence length="192" mass="20592">MNAIWIAVAAVSLLGLAFGAILGYASRRFAVEDDPVVEKIDEILPQSQCGQCGYPGCRPYAEAISCNGEKINRCAPGGEAVMLKIAELLNVEPQPLDGEAQELTPARMVAFIDENNCIGCTKCIQACPVDAIVGATRAMHTVMSDLCTGCNLCVDPCPTHCISLQPVAETPDSWKWDLNTIPVRIIPVEHHA</sequence>
<comment type="function">
    <text evidence="1">Part of a membrane-bound complex that couples electron transfer with translocation of ions across the membrane. Required to maintain the reduced state of SoxR.</text>
</comment>
<comment type="cofactor">
    <cofactor evidence="1">
        <name>[4Fe-4S] cluster</name>
        <dbReference type="ChEBI" id="CHEBI:49883"/>
    </cofactor>
    <text evidence="1">Binds 3 [4Fe-4S] clusters.</text>
</comment>
<comment type="subunit">
    <text evidence="1">The complex is composed of six subunits: RsxA, RsxB, RsxC, RsxD, RsxE and RsxG.</text>
</comment>
<comment type="subcellular location">
    <subcellularLocation>
        <location evidence="1">Cell inner membrane</location>
    </subcellularLocation>
</comment>
<comment type="similarity">
    <text evidence="1">Belongs to the 4Fe4S bacterial-type ferredoxin family. RnfB subfamily.</text>
</comment>
<organism>
    <name type="scientific">Escherichia coli O17:K52:H18 (strain UMN026 / ExPEC)</name>
    <dbReference type="NCBI Taxonomy" id="585056"/>
    <lineage>
        <taxon>Bacteria</taxon>
        <taxon>Pseudomonadati</taxon>
        <taxon>Pseudomonadota</taxon>
        <taxon>Gammaproteobacteria</taxon>
        <taxon>Enterobacterales</taxon>
        <taxon>Enterobacteriaceae</taxon>
        <taxon>Escherichia</taxon>
    </lineage>
</organism>
<gene>
    <name evidence="1" type="primary">rsxB</name>
    <name type="ordered locus">ECUMN_1919</name>
</gene>